<evidence type="ECO:0000255" key="1">
    <source>
        <dbReference type="HAMAP-Rule" id="MF_01241"/>
    </source>
</evidence>
<comment type="function">
    <text evidence="1">Catalyzes the reversible isomerization-deamination of glucosamine 6-phosphate (GlcN6P) to form fructose 6-phosphate (Fru6P) and ammonium ion.</text>
</comment>
<comment type="catalytic activity">
    <reaction evidence="1">
        <text>alpha-D-glucosamine 6-phosphate + H2O = beta-D-fructose 6-phosphate + NH4(+)</text>
        <dbReference type="Rhea" id="RHEA:12172"/>
        <dbReference type="ChEBI" id="CHEBI:15377"/>
        <dbReference type="ChEBI" id="CHEBI:28938"/>
        <dbReference type="ChEBI" id="CHEBI:57634"/>
        <dbReference type="ChEBI" id="CHEBI:75989"/>
        <dbReference type="EC" id="3.5.99.6"/>
    </reaction>
</comment>
<comment type="pathway">
    <text evidence="1">Amino-sugar metabolism; N-acetylneuraminate degradation; D-fructose 6-phosphate from N-acetylneuraminate: step 5/5.</text>
</comment>
<comment type="similarity">
    <text evidence="1">Belongs to the glucosamine/galactosamine-6-phosphate isomerase family. NagB subfamily.</text>
</comment>
<gene>
    <name evidence="1" type="primary">nagB</name>
    <name type="ordered locus">Blon_0881</name>
    <name type="ordered locus">BLIJ_0897</name>
</gene>
<proteinExistence type="inferred from homology"/>
<dbReference type="EC" id="3.5.99.6" evidence="1"/>
<dbReference type="EMBL" id="CP001095">
    <property type="protein sequence ID" value="ACJ51981.1"/>
    <property type="molecule type" value="Genomic_DNA"/>
</dbReference>
<dbReference type="EMBL" id="AP010889">
    <property type="protein sequence ID" value="BAJ68488.1"/>
    <property type="molecule type" value="Genomic_DNA"/>
</dbReference>
<dbReference type="RefSeq" id="WP_012577252.1">
    <property type="nucleotide sequence ID" value="NZ_JDTT01000006.1"/>
</dbReference>
<dbReference type="SMR" id="B7GQA1"/>
<dbReference type="KEGG" id="bln:Blon_0881"/>
<dbReference type="KEGG" id="blon:BLIJ_0897"/>
<dbReference type="PATRIC" id="fig|391904.8.peg.907"/>
<dbReference type="HOGENOM" id="CLU_049611_0_1_11"/>
<dbReference type="UniPathway" id="UPA00629">
    <property type="reaction ID" value="UER00684"/>
</dbReference>
<dbReference type="Proteomes" id="UP000001360">
    <property type="component" value="Chromosome"/>
</dbReference>
<dbReference type="GO" id="GO:0005737">
    <property type="term" value="C:cytoplasm"/>
    <property type="evidence" value="ECO:0007669"/>
    <property type="project" value="TreeGrafter"/>
</dbReference>
<dbReference type="GO" id="GO:0004342">
    <property type="term" value="F:glucosamine-6-phosphate deaminase activity"/>
    <property type="evidence" value="ECO:0007669"/>
    <property type="project" value="UniProtKB-UniRule"/>
</dbReference>
<dbReference type="GO" id="GO:0042802">
    <property type="term" value="F:identical protein binding"/>
    <property type="evidence" value="ECO:0007669"/>
    <property type="project" value="TreeGrafter"/>
</dbReference>
<dbReference type="GO" id="GO:0005975">
    <property type="term" value="P:carbohydrate metabolic process"/>
    <property type="evidence" value="ECO:0007669"/>
    <property type="project" value="InterPro"/>
</dbReference>
<dbReference type="GO" id="GO:0006043">
    <property type="term" value="P:glucosamine catabolic process"/>
    <property type="evidence" value="ECO:0007669"/>
    <property type="project" value="TreeGrafter"/>
</dbReference>
<dbReference type="GO" id="GO:0006046">
    <property type="term" value="P:N-acetylglucosamine catabolic process"/>
    <property type="evidence" value="ECO:0007669"/>
    <property type="project" value="TreeGrafter"/>
</dbReference>
<dbReference type="GO" id="GO:0019262">
    <property type="term" value="P:N-acetylneuraminate catabolic process"/>
    <property type="evidence" value="ECO:0007669"/>
    <property type="project" value="UniProtKB-UniRule"/>
</dbReference>
<dbReference type="CDD" id="cd01399">
    <property type="entry name" value="GlcN6P_deaminase"/>
    <property type="match status" value="1"/>
</dbReference>
<dbReference type="Gene3D" id="3.40.50.1360">
    <property type="match status" value="1"/>
</dbReference>
<dbReference type="HAMAP" id="MF_01241">
    <property type="entry name" value="GlcN6P_deamin"/>
    <property type="match status" value="1"/>
</dbReference>
<dbReference type="InterPro" id="IPR006148">
    <property type="entry name" value="Glc/Gal-6P_isomerase"/>
</dbReference>
<dbReference type="InterPro" id="IPR004547">
    <property type="entry name" value="Glucosamine6P_isomerase"/>
</dbReference>
<dbReference type="InterPro" id="IPR018321">
    <property type="entry name" value="Glucosamine6P_isomerase_CS"/>
</dbReference>
<dbReference type="InterPro" id="IPR037171">
    <property type="entry name" value="NagB/RpiA_transferase-like"/>
</dbReference>
<dbReference type="NCBIfam" id="TIGR00502">
    <property type="entry name" value="nagB"/>
    <property type="match status" value="1"/>
</dbReference>
<dbReference type="NCBIfam" id="NF001684">
    <property type="entry name" value="PRK00443.1-4"/>
    <property type="match status" value="1"/>
</dbReference>
<dbReference type="PANTHER" id="PTHR11280">
    <property type="entry name" value="GLUCOSAMINE-6-PHOSPHATE ISOMERASE"/>
    <property type="match status" value="1"/>
</dbReference>
<dbReference type="PANTHER" id="PTHR11280:SF5">
    <property type="entry name" value="GLUCOSAMINE-6-PHOSPHATE ISOMERASE"/>
    <property type="match status" value="1"/>
</dbReference>
<dbReference type="Pfam" id="PF01182">
    <property type="entry name" value="Glucosamine_iso"/>
    <property type="match status" value="1"/>
</dbReference>
<dbReference type="SUPFAM" id="SSF100950">
    <property type="entry name" value="NagB/RpiA/CoA transferase-like"/>
    <property type="match status" value="1"/>
</dbReference>
<dbReference type="PROSITE" id="PS01161">
    <property type="entry name" value="GLC_GALNAC_ISOMERASE"/>
    <property type="match status" value="1"/>
</dbReference>
<protein>
    <recommendedName>
        <fullName evidence="1">Glucosamine-6-phosphate deaminase</fullName>
        <ecNumber evidence="1">3.5.99.6</ecNumber>
    </recommendedName>
    <alternativeName>
        <fullName evidence="1">GlcN6P deaminase</fullName>
        <shortName evidence="1">GNPDA</shortName>
    </alternativeName>
    <alternativeName>
        <fullName evidence="1">Glucosamine-6-phosphate isomerase</fullName>
    </alternativeName>
</protein>
<sequence length="270" mass="28678">MPEIIIVKNEAEAGEIYGRCVADLIKAKPDAVLGLATGSSPLAAYQALAKIVKDEAIDVSGVRGFALDEYIGLPLTHPESYHATIHRTVVEPLGLDPAKVHVPGDVLNGTPLEDGDKVALAGPAYDRAIEAAGGIDVQILGIGTDGHVGFNEPGSSLASGTRVKTLAEQTRVDNARFFDNDINQVPTHCITQGIGTIMKARHLVLLAFGAGKAEAIEETVEGGLSAFCPASALQMHPHATIIVDEEAASRLRHKDYYRYAYTHKPAWQGI</sequence>
<feature type="chain" id="PRO_1000165013" description="Glucosamine-6-phosphate deaminase">
    <location>
        <begin position="1"/>
        <end position="270"/>
    </location>
</feature>
<feature type="active site" description="Proton acceptor; for enolization step" evidence="1">
    <location>
        <position position="68"/>
    </location>
</feature>
<feature type="active site" description="For ring-opening step" evidence="1">
    <location>
        <position position="145"/>
    </location>
</feature>
<feature type="active site" description="Proton acceptor; for ring-opening step" evidence="1">
    <location>
        <position position="147"/>
    </location>
</feature>
<feature type="active site" description="For ring-opening step" evidence="1">
    <location>
        <position position="152"/>
    </location>
</feature>
<reference key="1">
    <citation type="journal article" date="2008" name="Proc. Natl. Acad. Sci. U.S.A.">
        <title>The genome sequence of Bifidobacterium longum subsp. infantis reveals adaptations for milk utilization within the infant microbiome.</title>
        <authorList>
            <person name="Sela D.A."/>
            <person name="Chapman J."/>
            <person name="Adeuya A."/>
            <person name="Kim J.H."/>
            <person name="Chen F."/>
            <person name="Whitehead T.R."/>
            <person name="Lapidus A."/>
            <person name="Rokhsar D.S."/>
            <person name="Lebrilla C.B."/>
            <person name="German J.B."/>
            <person name="Price N.P."/>
            <person name="Richardson P.M."/>
            <person name="Mills D.A."/>
        </authorList>
    </citation>
    <scope>NUCLEOTIDE SEQUENCE [LARGE SCALE GENOMIC DNA]</scope>
    <source>
        <strain>ATCC 15697 / DSM 20088 / JCM 1222 / NCTC 11817 / S12</strain>
    </source>
</reference>
<reference key="2">
    <citation type="journal article" date="2011" name="Nature">
        <title>Bifidobacteria can protect from enteropathogenic infection through production of acetate.</title>
        <authorList>
            <person name="Fukuda S."/>
            <person name="Toh H."/>
            <person name="Hase K."/>
            <person name="Oshima K."/>
            <person name="Nakanishi Y."/>
            <person name="Yoshimura K."/>
            <person name="Tobe T."/>
            <person name="Clarke J.M."/>
            <person name="Topping D.L."/>
            <person name="Suzuki T."/>
            <person name="Taylor T.D."/>
            <person name="Itoh K."/>
            <person name="Kikuchi J."/>
            <person name="Morita H."/>
            <person name="Hattori M."/>
            <person name="Ohno H."/>
        </authorList>
    </citation>
    <scope>NUCLEOTIDE SEQUENCE [LARGE SCALE GENOMIC DNA]</scope>
    <source>
        <strain>ATCC 15697 / DSM 20088 / JCM 1222 / NCTC 11817 / S12</strain>
    </source>
</reference>
<keyword id="KW-0119">Carbohydrate metabolism</keyword>
<keyword id="KW-0378">Hydrolase</keyword>
<name>NAGB_BIFLS</name>
<accession>B7GQA1</accession>
<accession>E8MR63</accession>
<organism>
    <name type="scientific">Bifidobacterium longum subsp. infantis (strain ATCC 15697 / DSM 20088 / JCM 1222 / NCTC 11817 / S12)</name>
    <dbReference type="NCBI Taxonomy" id="391904"/>
    <lineage>
        <taxon>Bacteria</taxon>
        <taxon>Bacillati</taxon>
        <taxon>Actinomycetota</taxon>
        <taxon>Actinomycetes</taxon>
        <taxon>Bifidobacteriales</taxon>
        <taxon>Bifidobacteriaceae</taxon>
        <taxon>Bifidobacterium</taxon>
    </lineage>
</organism>